<dbReference type="EMBL" id="AJ007504">
    <property type="protein sequence ID" value="CAA07545.1"/>
    <property type="molecule type" value="Genomic_DNA"/>
</dbReference>
<dbReference type="SMR" id="O74300"/>
<dbReference type="VEuPathDB" id="FungiDB:SCHCODRAFT_02624306"/>
<dbReference type="OMA" id="GECNANA"/>
<dbReference type="GO" id="GO:0005576">
    <property type="term" value="C:extracellular region"/>
    <property type="evidence" value="ECO:0007669"/>
    <property type="project" value="UniProtKB-KW"/>
</dbReference>
<dbReference type="GO" id="GO:0009277">
    <property type="term" value="C:fungal-type cell wall"/>
    <property type="evidence" value="ECO:0007669"/>
    <property type="project" value="InterPro"/>
</dbReference>
<dbReference type="GO" id="GO:0005199">
    <property type="term" value="F:structural constituent of cell wall"/>
    <property type="evidence" value="ECO:0007669"/>
    <property type="project" value="InterPro"/>
</dbReference>
<dbReference type="CDD" id="cd23507">
    <property type="entry name" value="hydrophobin_I"/>
    <property type="match status" value="1"/>
</dbReference>
<dbReference type="InterPro" id="IPR001338">
    <property type="entry name" value="Hydrophobin"/>
</dbReference>
<dbReference type="InterPro" id="IPR019778">
    <property type="entry name" value="Hydrophobin_CS"/>
</dbReference>
<dbReference type="Pfam" id="PF01185">
    <property type="entry name" value="Hydrophobin"/>
    <property type="match status" value="1"/>
</dbReference>
<dbReference type="SMART" id="SM00075">
    <property type="entry name" value="HYDRO"/>
    <property type="match status" value="1"/>
</dbReference>
<dbReference type="PROSITE" id="PS00956">
    <property type="entry name" value="HYDROPHOBIN"/>
    <property type="match status" value="1"/>
</dbReference>
<accession>O74300</accession>
<organism>
    <name type="scientific">Schizophyllum commune</name>
    <name type="common">Split gill fungus</name>
    <dbReference type="NCBI Taxonomy" id="5334"/>
    <lineage>
        <taxon>Eukaryota</taxon>
        <taxon>Fungi</taxon>
        <taxon>Dikarya</taxon>
        <taxon>Basidiomycota</taxon>
        <taxon>Agaricomycotina</taxon>
        <taxon>Agaricomycetes</taxon>
        <taxon>Agaricomycetidae</taxon>
        <taxon>Agaricales</taxon>
        <taxon>Schizophyllaceae</taxon>
        <taxon>Schizophyllum</taxon>
    </lineage>
</organism>
<reference key="1">
    <citation type="journal article" date="1999" name="Mol. Microbiol.">
        <title>Introns are necessary for mRNA accumulation in Schizophyllum commune.</title>
        <authorList>
            <person name="Lugones L.G."/>
            <person name="Scholtmeijer K."/>
            <person name="Klootwijk R."/>
            <person name="Wessels J.G."/>
        </authorList>
    </citation>
    <scope>NUCLEOTIDE SEQUENCE [GENOMIC DNA]</scope>
    <source>
        <strain>ATCC 44201 / CBS 340.81 / UVM 4-40 / 4-40</strain>
    </source>
</reference>
<comment type="function">
    <text evidence="1 5">Aerial growth, conidiation, and dispersal of filamentous fungi in the environment rely upon a capability of their secreting small amphipathic proteins called hydrophobins (HPBs) with low sequence identity. Class I can self-assemble into an outermost layer of rodlet bundles on aerial cell surfaces, conferring cellular hydrophobicity that supports fungal growth, development and dispersal; whereas Class II form highly ordered films at water-air interfaces through intermolecular interactions but contribute nothing to the rodlet structure (Probable). SC6 is a dikaryon-specific class I hydrophobin that contributes to the formation of aerial hyphae and fruiting bodies (By similarity).</text>
</comment>
<comment type="subunit">
    <text evidence="1">Self-assembles to form functional amyloid fibrils called rodlets. Self-assembly into fibrillar rodlets occurs spontaneously at hydrophobic:hydrophilic interfaces and the rodlets further associate laterally to form amphipathic monolayers.</text>
</comment>
<comment type="subcellular location">
    <subcellularLocation>
        <location evidence="1">Secreted</location>
    </subcellularLocation>
    <subcellularLocation>
        <location evidence="1">Secreted</location>
        <location evidence="1">Cell wall</location>
    </subcellularLocation>
</comment>
<comment type="similarity">
    <text evidence="5">Belongs to the fungal hydrophobin family.</text>
</comment>
<keyword id="KW-0134">Cell wall</keyword>
<keyword id="KW-1015">Disulfide bond</keyword>
<keyword id="KW-0964">Secreted</keyword>
<keyword id="KW-0732">Signal</keyword>
<sequence length="185" mass="18417">MVSRVLALISVAMLVGARPYVQNVGDVDLNDVDATVGTGVVDTGMSGDLLAGLLANGLLADLLSEDADGHIPEVTGSSTEEATSSSTWSGASSKPTDSAPTQCNSGTLQCCESTTEAKDIDRVLLSTLLGVDVGSITGLIGKNCSPVSVVGVGAGSTCSTQTVCCDGDSFDGLINLGCKSGNVAV</sequence>
<protein>
    <recommendedName>
        <fullName evidence="4">Class I hydrophobin SC6</fullName>
    </recommendedName>
</protein>
<name>SC6_SCHCO</name>
<evidence type="ECO:0000250" key="1">
    <source>
        <dbReference type="UniProtKB" id="P16933"/>
    </source>
</evidence>
<evidence type="ECO:0000255" key="2"/>
<evidence type="ECO:0000256" key="3">
    <source>
        <dbReference type="SAM" id="MobiDB-lite"/>
    </source>
</evidence>
<evidence type="ECO:0000303" key="4">
    <source>
    </source>
</evidence>
<evidence type="ECO:0000305" key="5"/>
<feature type="signal peptide" evidence="2">
    <location>
        <begin position="1"/>
        <end position="17"/>
    </location>
</feature>
<feature type="chain" id="PRO_0000013515" description="Class I hydrophobin SC6">
    <location>
        <begin position="18"/>
        <end position="185"/>
    </location>
</feature>
<feature type="region of interest" description="Disordered" evidence="3">
    <location>
        <begin position="70"/>
        <end position="104"/>
    </location>
</feature>
<feature type="compositionally biased region" description="Low complexity" evidence="3">
    <location>
        <begin position="75"/>
        <end position="93"/>
    </location>
</feature>
<feature type="compositionally biased region" description="Polar residues" evidence="3">
    <location>
        <begin position="94"/>
        <end position="104"/>
    </location>
</feature>
<feature type="disulfide bond" evidence="1">
    <location>
        <begin position="103"/>
        <end position="164"/>
    </location>
</feature>
<feature type="disulfide bond" evidence="1">
    <location>
        <begin position="110"/>
        <end position="158"/>
    </location>
</feature>
<feature type="disulfide bond" evidence="1">
    <location>
        <begin position="111"/>
        <end position="144"/>
    </location>
</feature>
<feature type="disulfide bond" evidence="1">
    <location>
        <begin position="165"/>
        <end position="178"/>
    </location>
</feature>
<gene>
    <name evidence="4" type="primary">SC6</name>
</gene>
<proteinExistence type="inferred from homology"/>